<dbReference type="PIR" id="A02446">
    <property type="entry name" value="HBJS"/>
</dbReference>
<dbReference type="SMR" id="P02126"/>
<dbReference type="GO" id="GO:0072562">
    <property type="term" value="C:blood microparticle"/>
    <property type="evidence" value="ECO:0007669"/>
    <property type="project" value="TreeGrafter"/>
</dbReference>
<dbReference type="GO" id="GO:0031838">
    <property type="term" value="C:haptoglobin-hemoglobin complex"/>
    <property type="evidence" value="ECO:0007669"/>
    <property type="project" value="TreeGrafter"/>
</dbReference>
<dbReference type="GO" id="GO:0005833">
    <property type="term" value="C:hemoglobin complex"/>
    <property type="evidence" value="ECO:0007669"/>
    <property type="project" value="InterPro"/>
</dbReference>
<dbReference type="GO" id="GO:0031720">
    <property type="term" value="F:haptoglobin binding"/>
    <property type="evidence" value="ECO:0007669"/>
    <property type="project" value="TreeGrafter"/>
</dbReference>
<dbReference type="GO" id="GO:0020037">
    <property type="term" value="F:heme binding"/>
    <property type="evidence" value="ECO:0007669"/>
    <property type="project" value="InterPro"/>
</dbReference>
<dbReference type="GO" id="GO:0046872">
    <property type="term" value="F:metal ion binding"/>
    <property type="evidence" value="ECO:0007669"/>
    <property type="project" value="UniProtKB-KW"/>
</dbReference>
<dbReference type="GO" id="GO:0043177">
    <property type="term" value="F:organic acid binding"/>
    <property type="evidence" value="ECO:0007669"/>
    <property type="project" value="TreeGrafter"/>
</dbReference>
<dbReference type="GO" id="GO:0019825">
    <property type="term" value="F:oxygen binding"/>
    <property type="evidence" value="ECO:0007669"/>
    <property type="project" value="InterPro"/>
</dbReference>
<dbReference type="GO" id="GO:0005344">
    <property type="term" value="F:oxygen carrier activity"/>
    <property type="evidence" value="ECO:0007669"/>
    <property type="project" value="UniProtKB-KW"/>
</dbReference>
<dbReference type="GO" id="GO:0004601">
    <property type="term" value="F:peroxidase activity"/>
    <property type="evidence" value="ECO:0007669"/>
    <property type="project" value="TreeGrafter"/>
</dbReference>
<dbReference type="GO" id="GO:0042744">
    <property type="term" value="P:hydrogen peroxide catabolic process"/>
    <property type="evidence" value="ECO:0007669"/>
    <property type="project" value="TreeGrafter"/>
</dbReference>
<dbReference type="CDD" id="cd08925">
    <property type="entry name" value="Hb-beta-like"/>
    <property type="match status" value="1"/>
</dbReference>
<dbReference type="FunFam" id="1.10.490.10:FF:000001">
    <property type="entry name" value="Hemoglobin subunit beta"/>
    <property type="match status" value="1"/>
</dbReference>
<dbReference type="Gene3D" id="1.10.490.10">
    <property type="entry name" value="Globins"/>
    <property type="match status" value="1"/>
</dbReference>
<dbReference type="InterPro" id="IPR000971">
    <property type="entry name" value="Globin"/>
</dbReference>
<dbReference type="InterPro" id="IPR009050">
    <property type="entry name" value="Globin-like_sf"/>
</dbReference>
<dbReference type="InterPro" id="IPR012292">
    <property type="entry name" value="Globin/Proto"/>
</dbReference>
<dbReference type="InterPro" id="IPR002337">
    <property type="entry name" value="Hemoglobin_b"/>
</dbReference>
<dbReference type="InterPro" id="IPR050056">
    <property type="entry name" value="Hemoglobin_oxygen_transport"/>
</dbReference>
<dbReference type="PANTHER" id="PTHR11442">
    <property type="entry name" value="HEMOGLOBIN FAMILY MEMBER"/>
    <property type="match status" value="1"/>
</dbReference>
<dbReference type="PANTHER" id="PTHR11442:SF7">
    <property type="entry name" value="HEMOGLOBIN SUBUNIT EPSILON"/>
    <property type="match status" value="1"/>
</dbReference>
<dbReference type="Pfam" id="PF00042">
    <property type="entry name" value="Globin"/>
    <property type="match status" value="1"/>
</dbReference>
<dbReference type="PRINTS" id="PR00814">
    <property type="entry name" value="BETAHAEM"/>
</dbReference>
<dbReference type="SUPFAM" id="SSF46458">
    <property type="entry name" value="Globin-like"/>
    <property type="match status" value="1"/>
</dbReference>
<dbReference type="PROSITE" id="PS01033">
    <property type="entry name" value="GLOBIN"/>
    <property type="match status" value="1"/>
</dbReference>
<reference key="1">
    <citation type="journal article" date="1984" name="Hoppe-Seyler's Z. Physiol. Chem.">
        <title>Hemoglobins of the common starling (Sturnus vulgaris, Passeriformes). The primary structures of the alphaA, alphaD and beta chains.</title>
        <authorList>
            <person name="Oberthur W."/>
            <person name="Braunitzer G."/>
        </authorList>
    </citation>
    <scope>PROTEIN SEQUENCE</scope>
</reference>
<protein>
    <recommendedName>
        <fullName>Hemoglobin subunit beta</fullName>
    </recommendedName>
    <alternativeName>
        <fullName>Beta-globin</fullName>
    </alternativeName>
    <alternativeName>
        <fullName>Hemoglobin beta chain</fullName>
    </alternativeName>
</protein>
<sequence length="146" mass="16182">VQWTAEEKQLITGLWGKVNVAECGAEALARLLIVYPWTQRFFASFGNLSSPTAVLGNPKVQAHGKKVLTSFGDAVKNLDSIKNTFSQLSELHCDKLHVDPENFRLLGDILVVVLAAHFGKDFTPDCQAAWQKLVRVVAHALARKYH</sequence>
<comment type="function">
    <text>Involved in oxygen transport from the lung to the various peripheral tissues.</text>
</comment>
<comment type="subunit">
    <text>Heterotetramer of two alpha chains and two beta chains.</text>
</comment>
<comment type="tissue specificity">
    <text>Red blood cells.</text>
</comment>
<comment type="similarity">
    <text evidence="1">Belongs to the globin family.</text>
</comment>
<feature type="chain" id="PRO_0000053118" description="Hemoglobin subunit beta">
    <location>
        <begin position="1"/>
        <end position="146"/>
    </location>
</feature>
<feature type="domain" description="Globin" evidence="1">
    <location>
        <begin position="2"/>
        <end position="146"/>
    </location>
</feature>
<feature type="binding site" description="distal binding residue">
    <location>
        <position position="63"/>
    </location>
    <ligand>
        <name>heme b</name>
        <dbReference type="ChEBI" id="CHEBI:60344"/>
    </ligand>
    <ligandPart>
        <name>Fe</name>
        <dbReference type="ChEBI" id="CHEBI:18248"/>
    </ligandPart>
</feature>
<feature type="binding site" description="proximal binding residue">
    <location>
        <position position="92"/>
    </location>
    <ligand>
        <name>heme b</name>
        <dbReference type="ChEBI" id="CHEBI:60344"/>
    </ligand>
    <ligandPart>
        <name>Fe</name>
        <dbReference type="ChEBI" id="CHEBI:18248"/>
    </ligandPart>
</feature>
<evidence type="ECO:0000255" key="1">
    <source>
        <dbReference type="PROSITE-ProRule" id="PRU00238"/>
    </source>
</evidence>
<organism>
    <name type="scientific">Sturnus vulgaris</name>
    <name type="common">Starling</name>
    <dbReference type="NCBI Taxonomy" id="9172"/>
    <lineage>
        <taxon>Eukaryota</taxon>
        <taxon>Metazoa</taxon>
        <taxon>Chordata</taxon>
        <taxon>Craniata</taxon>
        <taxon>Vertebrata</taxon>
        <taxon>Euteleostomi</taxon>
        <taxon>Archelosauria</taxon>
        <taxon>Archosauria</taxon>
        <taxon>Dinosauria</taxon>
        <taxon>Saurischia</taxon>
        <taxon>Theropoda</taxon>
        <taxon>Coelurosauria</taxon>
        <taxon>Aves</taxon>
        <taxon>Neognathae</taxon>
        <taxon>Neoaves</taxon>
        <taxon>Telluraves</taxon>
        <taxon>Australaves</taxon>
        <taxon>Passeriformes</taxon>
        <taxon>Sturnidae</taxon>
        <taxon>Sturnus</taxon>
    </lineage>
</organism>
<keyword id="KW-0903">Direct protein sequencing</keyword>
<keyword id="KW-0349">Heme</keyword>
<keyword id="KW-0408">Iron</keyword>
<keyword id="KW-0479">Metal-binding</keyword>
<keyword id="KW-0561">Oxygen transport</keyword>
<keyword id="KW-0813">Transport</keyword>
<name>HBB_STUVU</name>
<proteinExistence type="evidence at protein level"/>
<gene>
    <name type="primary">HBB</name>
</gene>
<accession>P02126</accession>